<protein>
    <recommendedName>
        <fullName evidence="1">Putative antitoxin M1627_0365</fullName>
    </recommendedName>
</protein>
<name>Y365_SACI3</name>
<comment type="function">
    <text evidence="1">Possibly the antitoxin component of a type II toxin-antitoxin (TA) system.</text>
</comment>
<comment type="similarity">
    <text evidence="1">Belongs to the UPF0330 family.</text>
</comment>
<keyword id="KW-1277">Toxin-antitoxin system</keyword>
<organism>
    <name type="scientific">Saccharolobus islandicus (strain M.16.27)</name>
    <name type="common">Sulfolobus islandicus</name>
    <dbReference type="NCBI Taxonomy" id="427318"/>
    <lineage>
        <taxon>Archaea</taxon>
        <taxon>Thermoproteota</taxon>
        <taxon>Thermoprotei</taxon>
        <taxon>Sulfolobales</taxon>
        <taxon>Sulfolobaceae</taxon>
        <taxon>Saccharolobus</taxon>
    </lineage>
</organism>
<accession>C3N1X1</accession>
<dbReference type="EMBL" id="CP001401">
    <property type="protein sequence ID" value="ACP54381.1"/>
    <property type="molecule type" value="Genomic_DNA"/>
</dbReference>
<dbReference type="RefSeq" id="WP_012718388.1">
    <property type="nucleotide sequence ID" value="NC_012632.1"/>
</dbReference>
<dbReference type="SMR" id="C3N1X1"/>
<dbReference type="KEGG" id="sim:M1627_0365"/>
<dbReference type="HOGENOM" id="CLU_170073_1_1_2"/>
<dbReference type="Proteomes" id="UP000002307">
    <property type="component" value="Chromosome"/>
</dbReference>
<dbReference type="HAMAP" id="MF_00794">
    <property type="entry name" value="UPF0330"/>
    <property type="match status" value="1"/>
</dbReference>
<dbReference type="InterPro" id="IPR003847">
    <property type="entry name" value="Put_antitoxin"/>
</dbReference>
<dbReference type="NCBIfam" id="NF010249">
    <property type="entry name" value="PRK13696.1-1"/>
    <property type="match status" value="1"/>
</dbReference>
<dbReference type="Pfam" id="PF02697">
    <property type="entry name" value="VAPB_antitox"/>
    <property type="match status" value="1"/>
</dbReference>
<feature type="chain" id="PRO_1000212962" description="Putative antitoxin M1627_0365">
    <location>
        <begin position="1"/>
        <end position="73"/>
    </location>
</feature>
<reference key="1">
    <citation type="journal article" date="2009" name="Proc. Natl. Acad. Sci. U.S.A.">
        <title>Biogeography of the Sulfolobus islandicus pan-genome.</title>
        <authorList>
            <person name="Reno M.L."/>
            <person name="Held N.L."/>
            <person name="Fields C.J."/>
            <person name="Burke P.V."/>
            <person name="Whitaker R.J."/>
        </authorList>
    </citation>
    <scope>NUCLEOTIDE SEQUENCE [LARGE SCALE GENOMIC DNA]</scope>
    <source>
        <strain>M.16.27</strain>
    </source>
</reference>
<evidence type="ECO:0000255" key="1">
    <source>
        <dbReference type="HAMAP-Rule" id="MF_00794"/>
    </source>
</evidence>
<gene>
    <name type="ordered locus">M1627_0365</name>
</gene>
<proteinExistence type="inferred from homology"/>
<sequence length="73" mass="8686">MAKTITISEEAYKLLLKEKRDGESFSDVIVRLIKGNRREVMDYAGIWSDMNDEESNKLFKDLEKMWERWNVNA</sequence>